<accession>O77683</accession>
<name>RND3_PIG</name>
<protein>
    <recommendedName>
        <fullName>Rho-related GTP-binding protein RhoE</fullName>
    </recommendedName>
    <alternativeName>
        <fullName>Rho family GTPase 3</fullName>
    </alternativeName>
    <alternativeName>
        <fullName>Rho-related GTP-binding protein Rho8</fullName>
    </alternativeName>
    <alternativeName>
        <fullName>Rnd3</fullName>
    </alternativeName>
</protein>
<organism>
    <name type="scientific">Sus scrofa</name>
    <name type="common">Pig</name>
    <dbReference type="NCBI Taxonomy" id="9823"/>
    <lineage>
        <taxon>Eukaryota</taxon>
        <taxon>Metazoa</taxon>
        <taxon>Chordata</taxon>
        <taxon>Craniata</taxon>
        <taxon>Vertebrata</taxon>
        <taxon>Euteleostomi</taxon>
        <taxon>Mammalia</taxon>
        <taxon>Eutheria</taxon>
        <taxon>Laurasiatheria</taxon>
        <taxon>Artiodactyla</taxon>
        <taxon>Suina</taxon>
        <taxon>Suidae</taxon>
        <taxon>Sus</taxon>
    </lineage>
</organism>
<gene>
    <name type="primary">RND3</name>
    <name type="synonym">ARHE</name>
    <name type="synonym">RHO8</name>
    <name type="synonym">RHOE</name>
</gene>
<comment type="function">
    <text evidence="1">Binds GTP but lacks intrinsic GTPase activity and is resistant to Rho-specific GTPase-activating proteins.</text>
</comment>
<comment type="subunit">
    <text evidence="1">Binds ROCK1. Interacts with UBXD5 (By similarity).</text>
</comment>
<comment type="subcellular location">
    <subcellularLocation>
        <location evidence="3">Cell membrane</location>
        <topology evidence="3">Lipid-anchor</topology>
        <orientation evidence="3">Cytoplasmic side</orientation>
    </subcellularLocation>
</comment>
<comment type="similarity">
    <text evidence="3">Belongs to the small GTPase superfamily. Rho family.</text>
</comment>
<keyword id="KW-1003">Cell membrane</keyword>
<keyword id="KW-0342">GTP-binding</keyword>
<keyword id="KW-0449">Lipoprotein</keyword>
<keyword id="KW-0472">Membrane</keyword>
<keyword id="KW-0488">Methylation</keyword>
<keyword id="KW-0547">Nucleotide-binding</keyword>
<keyword id="KW-0636">Prenylation</keyword>
<keyword id="KW-1185">Reference proteome</keyword>
<feature type="chain" id="PRO_0000198880" description="Rho-related GTP-binding protein RhoE">
    <location>
        <begin position="1"/>
        <end position="241"/>
    </location>
</feature>
<feature type="propeptide" id="PRO_0000281232" description="Removed in mature form" evidence="1">
    <location>
        <begin position="242"/>
        <end position="244"/>
    </location>
</feature>
<feature type="short sequence motif" description="Effector region" evidence="2">
    <location>
        <begin position="52"/>
        <end position="60"/>
    </location>
</feature>
<feature type="binding site" evidence="1">
    <location>
        <begin position="30"/>
        <end position="37"/>
    </location>
    <ligand>
        <name>GTP</name>
        <dbReference type="ChEBI" id="CHEBI:37565"/>
    </ligand>
</feature>
<feature type="binding site" evidence="1">
    <location>
        <begin position="77"/>
        <end position="81"/>
    </location>
    <ligand>
        <name>GTP</name>
        <dbReference type="ChEBI" id="CHEBI:37565"/>
    </ligand>
</feature>
<feature type="binding site" evidence="1">
    <location>
        <begin position="135"/>
        <end position="138"/>
    </location>
    <ligand>
        <name>GTP</name>
        <dbReference type="ChEBI" id="CHEBI:37565"/>
    </ligand>
</feature>
<feature type="modified residue" description="Cysteine methyl ester" evidence="1">
    <location>
        <position position="241"/>
    </location>
</feature>
<feature type="lipid moiety-binding region" description="S-farnesyl cysteine" evidence="1">
    <location>
        <position position="241"/>
    </location>
</feature>
<dbReference type="EMBL" id="AF078839">
    <property type="protein sequence ID" value="AAC28383.1"/>
    <property type="molecule type" value="mRNA"/>
</dbReference>
<dbReference type="RefSeq" id="NP_999461.1">
    <property type="nucleotide sequence ID" value="NM_214296.1"/>
</dbReference>
<dbReference type="SMR" id="O77683"/>
<dbReference type="FunCoup" id="O77683">
    <property type="interactions" value="1"/>
</dbReference>
<dbReference type="STRING" id="9823.ENSSSCP00000051155"/>
<dbReference type="PaxDb" id="9823-ENSSSCP00000023328"/>
<dbReference type="PeptideAtlas" id="O77683"/>
<dbReference type="GeneID" id="397559"/>
<dbReference type="KEGG" id="ssc:397559"/>
<dbReference type="CTD" id="390"/>
<dbReference type="eggNOG" id="KOG0393">
    <property type="taxonomic scope" value="Eukaryota"/>
</dbReference>
<dbReference type="InParanoid" id="O77683"/>
<dbReference type="OrthoDB" id="8830751at2759"/>
<dbReference type="Proteomes" id="UP000008227">
    <property type="component" value="Unplaced"/>
</dbReference>
<dbReference type="Proteomes" id="UP000314985">
    <property type="component" value="Unplaced"/>
</dbReference>
<dbReference type="Proteomes" id="UP000694570">
    <property type="component" value="Unplaced"/>
</dbReference>
<dbReference type="Proteomes" id="UP000694571">
    <property type="component" value="Unplaced"/>
</dbReference>
<dbReference type="Proteomes" id="UP000694720">
    <property type="component" value="Unplaced"/>
</dbReference>
<dbReference type="Proteomes" id="UP000694722">
    <property type="component" value="Unplaced"/>
</dbReference>
<dbReference type="Proteomes" id="UP000694723">
    <property type="component" value="Unplaced"/>
</dbReference>
<dbReference type="Proteomes" id="UP000694724">
    <property type="component" value="Unplaced"/>
</dbReference>
<dbReference type="Proteomes" id="UP000694725">
    <property type="component" value="Unplaced"/>
</dbReference>
<dbReference type="Proteomes" id="UP000694726">
    <property type="component" value="Unplaced"/>
</dbReference>
<dbReference type="Proteomes" id="UP000694727">
    <property type="component" value="Unplaced"/>
</dbReference>
<dbReference type="Proteomes" id="UP000694728">
    <property type="component" value="Unplaced"/>
</dbReference>
<dbReference type="GO" id="GO:0005829">
    <property type="term" value="C:cytosol"/>
    <property type="evidence" value="ECO:0000318"/>
    <property type="project" value="GO_Central"/>
</dbReference>
<dbReference type="GO" id="GO:0005886">
    <property type="term" value="C:plasma membrane"/>
    <property type="evidence" value="ECO:0000318"/>
    <property type="project" value="GO_Central"/>
</dbReference>
<dbReference type="GO" id="GO:0005525">
    <property type="term" value="F:GTP binding"/>
    <property type="evidence" value="ECO:0000318"/>
    <property type="project" value="GO_Central"/>
</dbReference>
<dbReference type="GO" id="GO:0003924">
    <property type="term" value="F:GTPase activity"/>
    <property type="evidence" value="ECO:0000318"/>
    <property type="project" value="GO_Central"/>
</dbReference>
<dbReference type="GO" id="GO:0019901">
    <property type="term" value="F:protein kinase binding"/>
    <property type="evidence" value="ECO:0000318"/>
    <property type="project" value="GO_Central"/>
</dbReference>
<dbReference type="GO" id="GO:0007015">
    <property type="term" value="P:actin filament organization"/>
    <property type="evidence" value="ECO:0000318"/>
    <property type="project" value="GO_Central"/>
</dbReference>
<dbReference type="GO" id="GO:0032956">
    <property type="term" value="P:regulation of actin cytoskeleton organization"/>
    <property type="evidence" value="ECO:0000318"/>
    <property type="project" value="GO_Central"/>
</dbReference>
<dbReference type="GO" id="GO:0007165">
    <property type="term" value="P:signal transduction"/>
    <property type="evidence" value="ECO:0000318"/>
    <property type="project" value="GO_Central"/>
</dbReference>
<dbReference type="GO" id="GO:0007264">
    <property type="term" value="P:small GTPase-mediated signal transduction"/>
    <property type="evidence" value="ECO:0007669"/>
    <property type="project" value="InterPro"/>
</dbReference>
<dbReference type="CDD" id="cd04172">
    <property type="entry name" value="Rnd3_RhoE_Rho8"/>
    <property type="match status" value="1"/>
</dbReference>
<dbReference type="FunFam" id="3.40.50.300:FF:000407">
    <property type="entry name" value="Rho-related GTP-binding protein RhoE"/>
    <property type="match status" value="1"/>
</dbReference>
<dbReference type="Gene3D" id="3.40.50.300">
    <property type="entry name" value="P-loop containing nucleotide triphosphate hydrolases"/>
    <property type="match status" value="1"/>
</dbReference>
<dbReference type="InterPro" id="IPR027417">
    <property type="entry name" value="P-loop_NTPase"/>
</dbReference>
<dbReference type="InterPro" id="IPR041843">
    <property type="entry name" value="RhoE"/>
</dbReference>
<dbReference type="InterPro" id="IPR005225">
    <property type="entry name" value="Small_GTP-bd"/>
</dbReference>
<dbReference type="InterPro" id="IPR001806">
    <property type="entry name" value="Small_GTPase"/>
</dbReference>
<dbReference type="InterPro" id="IPR003578">
    <property type="entry name" value="Small_GTPase_Rho"/>
</dbReference>
<dbReference type="NCBIfam" id="TIGR00231">
    <property type="entry name" value="small_GTP"/>
    <property type="match status" value="1"/>
</dbReference>
<dbReference type="PANTHER" id="PTHR24072">
    <property type="entry name" value="RHO FAMILY GTPASE"/>
    <property type="match status" value="1"/>
</dbReference>
<dbReference type="Pfam" id="PF00071">
    <property type="entry name" value="Ras"/>
    <property type="match status" value="1"/>
</dbReference>
<dbReference type="PRINTS" id="PR00449">
    <property type="entry name" value="RASTRNSFRMNG"/>
</dbReference>
<dbReference type="SMART" id="SM00175">
    <property type="entry name" value="RAB"/>
    <property type="match status" value="1"/>
</dbReference>
<dbReference type="SMART" id="SM00173">
    <property type="entry name" value="RAS"/>
    <property type="match status" value="1"/>
</dbReference>
<dbReference type="SMART" id="SM00174">
    <property type="entry name" value="RHO"/>
    <property type="match status" value="1"/>
</dbReference>
<dbReference type="SUPFAM" id="SSF52540">
    <property type="entry name" value="P-loop containing nucleoside triphosphate hydrolases"/>
    <property type="match status" value="1"/>
</dbReference>
<dbReference type="PROSITE" id="PS51420">
    <property type="entry name" value="RHO"/>
    <property type="match status" value="1"/>
</dbReference>
<evidence type="ECO:0000250" key="1"/>
<evidence type="ECO:0000255" key="2"/>
<evidence type="ECO:0000305" key="3"/>
<reference key="1">
    <citation type="submission" date="1998-07" db="EMBL/GenBank/DDBJ databases">
        <title>cDNA for porcine Rnd3/Rho8.</title>
        <authorList>
            <person name="Reichenberg S."/>
            <person name="Plenz G."/>
            <person name="Robenek H."/>
        </authorList>
    </citation>
    <scope>NUCLEOTIDE SEQUENCE [MRNA]</scope>
    <source>
        <tissue>Smooth muscle</tissue>
    </source>
</reference>
<sequence>MKERRASQKLSSKSIMDPNQNVKCKIVVVGDSQCGRTALLHVFAKDCFPENYVPTVFENYTASFEIDTQRIELSLWDTSGSPYYDNVRPLSYPDSDAVLICFDISRPETLDSVLKKWKGEIQEFCPNTKMLLVGCKSDLRTDVSTLVELSNHRQTPVSYDQGANMAKQIGAATYIECSALQSENSVRDIFHVATLACVNKTNKNVKRNKSQRATKRISHMPSRPELSAVATDLRKDKAKSCTVM</sequence>
<proteinExistence type="evidence at transcript level"/>